<keyword id="KW-0255">Endonuclease</keyword>
<keyword id="KW-0378">Hydrolase</keyword>
<keyword id="KW-0540">Nuclease</keyword>
<keyword id="KW-0694">RNA-binding</keyword>
<keyword id="KW-0819">tRNA processing</keyword>
<feature type="chain" id="PRO_0000198445" description="Ribonuclease P protein component">
    <location>
        <begin position="1"/>
        <end position="119"/>
    </location>
</feature>
<accession>Q9PLD7</accession>
<name>RNPA_CHLMU</name>
<reference key="1">
    <citation type="journal article" date="2000" name="Nucleic Acids Res.">
        <title>Genome sequences of Chlamydia trachomatis MoPn and Chlamydia pneumoniae AR39.</title>
        <authorList>
            <person name="Read T.D."/>
            <person name="Brunham R.C."/>
            <person name="Shen C."/>
            <person name="Gill S.R."/>
            <person name="Heidelberg J.F."/>
            <person name="White O."/>
            <person name="Hickey E.K."/>
            <person name="Peterson J.D."/>
            <person name="Utterback T.R."/>
            <person name="Berry K.J."/>
            <person name="Bass S."/>
            <person name="Linher K.D."/>
            <person name="Weidman J.F."/>
            <person name="Khouri H.M."/>
            <person name="Craven B."/>
            <person name="Bowman C."/>
            <person name="Dodson R.J."/>
            <person name="Gwinn M.L."/>
            <person name="Nelson W.C."/>
            <person name="DeBoy R.T."/>
            <person name="Kolonay J.F."/>
            <person name="McClarty G."/>
            <person name="Salzberg S.L."/>
            <person name="Eisen J.A."/>
            <person name="Fraser C.M."/>
        </authorList>
    </citation>
    <scope>NUCLEOTIDE SEQUENCE [LARGE SCALE GENOMIC DNA]</scope>
    <source>
        <strain>MoPn / Nigg</strain>
    </source>
</reference>
<organism>
    <name type="scientific">Chlamydia muridarum (strain MoPn / Nigg)</name>
    <dbReference type="NCBI Taxonomy" id="243161"/>
    <lineage>
        <taxon>Bacteria</taxon>
        <taxon>Pseudomonadati</taxon>
        <taxon>Chlamydiota</taxon>
        <taxon>Chlamydiia</taxon>
        <taxon>Chlamydiales</taxon>
        <taxon>Chlamydiaceae</taxon>
        <taxon>Chlamydia/Chlamydophila group</taxon>
        <taxon>Chlamydia</taxon>
    </lineage>
</organism>
<sequence>MHRLTLPKSARLLKRKQFVYVQRCGQYCRTDQATLRIVPSRHSNIRKVGVTVSKKFGKAHQRNRFKRIVREAFRHVRPNLPACQVVVSPKGGTLPNFGKLSADLLKHIPEALPLVTSSK</sequence>
<evidence type="ECO:0000255" key="1">
    <source>
        <dbReference type="HAMAP-Rule" id="MF_00227"/>
    </source>
</evidence>
<proteinExistence type="inferred from homology"/>
<gene>
    <name evidence="1" type="primary">rnpA</name>
    <name type="ordered locus">TC_0167</name>
</gene>
<protein>
    <recommendedName>
        <fullName evidence="1">Ribonuclease P protein component</fullName>
        <shortName evidence="1">RNase P protein</shortName>
        <shortName evidence="1">RNaseP protein</shortName>
        <ecNumber evidence="1">3.1.26.5</ecNumber>
    </recommendedName>
    <alternativeName>
        <fullName evidence="1">Protein C5</fullName>
    </alternativeName>
</protein>
<dbReference type="EC" id="3.1.26.5" evidence="1"/>
<dbReference type="EMBL" id="AE002160">
    <property type="protein sequence ID" value="AAF73535.1"/>
    <property type="molecule type" value="Genomic_DNA"/>
</dbReference>
<dbReference type="RefSeq" id="WP_010229579.1">
    <property type="nucleotide sequence ID" value="NZ_CP063055.1"/>
</dbReference>
<dbReference type="SMR" id="Q9PLD7"/>
<dbReference type="GeneID" id="1246292"/>
<dbReference type="KEGG" id="cmu:TC_0167"/>
<dbReference type="eggNOG" id="COG0594">
    <property type="taxonomic scope" value="Bacteria"/>
</dbReference>
<dbReference type="HOGENOM" id="CLU_117179_9_2_0"/>
<dbReference type="OrthoDB" id="9810867at2"/>
<dbReference type="Proteomes" id="UP000000800">
    <property type="component" value="Chromosome"/>
</dbReference>
<dbReference type="GO" id="GO:0030677">
    <property type="term" value="C:ribonuclease P complex"/>
    <property type="evidence" value="ECO:0007669"/>
    <property type="project" value="TreeGrafter"/>
</dbReference>
<dbReference type="GO" id="GO:0042781">
    <property type="term" value="F:3'-tRNA processing endoribonuclease activity"/>
    <property type="evidence" value="ECO:0007669"/>
    <property type="project" value="TreeGrafter"/>
</dbReference>
<dbReference type="GO" id="GO:0004526">
    <property type="term" value="F:ribonuclease P activity"/>
    <property type="evidence" value="ECO:0007669"/>
    <property type="project" value="UniProtKB-UniRule"/>
</dbReference>
<dbReference type="GO" id="GO:0000049">
    <property type="term" value="F:tRNA binding"/>
    <property type="evidence" value="ECO:0007669"/>
    <property type="project" value="UniProtKB-UniRule"/>
</dbReference>
<dbReference type="GO" id="GO:0001682">
    <property type="term" value="P:tRNA 5'-leader removal"/>
    <property type="evidence" value="ECO:0007669"/>
    <property type="project" value="UniProtKB-UniRule"/>
</dbReference>
<dbReference type="Gene3D" id="3.30.230.10">
    <property type="match status" value="1"/>
</dbReference>
<dbReference type="HAMAP" id="MF_00227">
    <property type="entry name" value="RNase_P"/>
    <property type="match status" value="1"/>
</dbReference>
<dbReference type="InterPro" id="IPR020568">
    <property type="entry name" value="Ribosomal_Su5_D2-typ_SF"/>
</dbReference>
<dbReference type="InterPro" id="IPR014721">
    <property type="entry name" value="Ribsml_uS5_D2-typ_fold_subgr"/>
</dbReference>
<dbReference type="InterPro" id="IPR000100">
    <property type="entry name" value="RNase_P"/>
</dbReference>
<dbReference type="InterPro" id="IPR020539">
    <property type="entry name" value="RNase_P_CS"/>
</dbReference>
<dbReference type="NCBIfam" id="TIGR00188">
    <property type="entry name" value="rnpA"/>
    <property type="match status" value="1"/>
</dbReference>
<dbReference type="PANTHER" id="PTHR33992">
    <property type="entry name" value="RIBONUCLEASE P PROTEIN COMPONENT"/>
    <property type="match status" value="1"/>
</dbReference>
<dbReference type="PANTHER" id="PTHR33992:SF1">
    <property type="entry name" value="RIBONUCLEASE P PROTEIN COMPONENT"/>
    <property type="match status" value="1"/>
</dbReference>
<dbReference type="Pfam" id="PF00825">
    <property type="entry name" value="Ribonuclease_P"/>
    <property type="match status" value="1"/>
</dbReference>
<dbReference type="SUPFAM" id="SSF54211">
    <property type="entry name" value="Ribosomal protein S5 domain 2-like"/>
    <property type="match status" value="1"/>
</dbReference>
<dbReference type="PROSITE" id="PS00648">
    <property type="entry name" value="RIBONUCLEASE_P"/>
    <property type="match status" value="1"/>
</dbReference>
<comment type="function">
    <text evidence="1">RNaseP catalyzes the removal of the 5'-leader sequence from pre-tRNA to produce the mature 5'-terminus. It can also cleave other RNA substrates such as 4.5S RNA. The protein component plays an auxiliary but essential role in vivo by binding to the 5'-leader sequence and broadening the substrate specificity of the ribozyme.</text>
</comment>
<comment type="catalytic activity">
    <reaction evidence="1">
        <text>Endonucleolytic cleavage of RNA, removing 5'-extranucleotides from tRNA precursor.</text>
        <dbReference type="EC" id="3.1.26.5"/>
    </reaction>
</comment>
<comment type="subunit">
    <text evidence="1">Consists of a catalytic RNA component (M1 or rnpB) and a protein subunit.</text>
</comment>
<comment type="similarity">
    <text evidence="1">Belongs to the RnpA family.</text>
</comment>